<proteinExistence type="inferred from homology"/>
<protein>
    <recommendedName>
        <fullName evidence="1">Pyridoxal 5'-phosphate synthase subunit PdxT</fullName>
        <ecNumber evidence="1">4.3.3.6</ecNumber>
    </recommendedName>
    <alternativeName>
        <fullName evidence="1">Pdx2</fullName>
    </alternativeName>
    <alternativeName>
        <fullName evidence="1">Pyridoxal 5'-phosphate synthase glutaminase subunit</fullName>
        <ecNumber evidence="1">3.5.1.2</ecNumber>
    </alternativeName>
</protein>
<evidence type="ECO:0000255" key="1">
    <source>
        <dbReference type="HAMAP-Rule" id="MF_01615"/>
    </source>
</evidence>
<gene>
    <name evidence="1" type="primary">pdxT</name>
    <name type="ordered locus">TW505</name>
</gene>
<comment type="function">
    <text evidence="1">Catalyzes the hydrolysis of glutamine to glutamate and ammonia as part of the biosynthesis of pyridoxal 5'-phosphate. The resulting ammonia molecule is channeled to the active site of PdxS.</text>
</comment>
<comment type="catalytic activity">
    <reaction evidence="1">
        <text>aldehydo-D-ribose 5-phosphate + D-glyceraldehyde 3-phosphate + L-glutamine = pyridoxal 5'-phosphate + L-glutamate + phosphate + 3 H2O + H(+)</text>
        <dbReference type="Rhea" id="RHEA:31507"/>
        <dbReference type="ChEBI" id="CHEBI:15377"/>
        <dbReference type="ChEBI" id="CHEBI:15378"/>
        <dbReference type="ChEBI" id="CHEBI:29985"/>
        <dbReference type="ChEBI" id="CHEBI:43474"/>
        <dbReference type="ChEBI" id="CHEBI:58273"/>
        <dbReference type="ChEBI" id="CHEBI:58359"/>
        <dbReference type="ChEBI" id="CHEBI:59776"/>
        <dbReference type="ChEBI" id="CHEBI:597326"/>
        <dbReference type="EC" id="4.3.3.6"/>
    </reaction>
</comment>
<comment type="catalytic activity">
    <reaction evidence="1">
        <text>L-glutamine + H2O = L-glutamate + NH4(+)</text>
        <dbReference type="Rhea" id="RHEA:15889"/>
        <dbReference type="ChEBI" id="CHEBI:15377"/>
        <dbReference type="ChEBI" id="CHEBI:28938"/>
        <dbReference type="ChEBI" id="CHEBI:29985"/>
        <dbReference type="ChEBI" id="CHEBI:58359"/>
        <dbReference type="EC" id="3.5.1.2"/>
    </reaction>
</comment>
<comment type="pathway">
    <text evidence="1">Cofactor biosynthesis; pyridoxal 5'-phosphate biosynthesis.</text>
</comment>
<comment type="subunit">
    <text evidence="1">In the presence of PdxS, forms a dodecamer of heterodimers. Only shows activity in the heterodimer.</text>
</comment>
<comment type="similarity">
    <text evidence="1">Belongs to the glutaminase PdxT/SNO family.</text>
</comment>
<dbReference type="EC" id="4.3.3.6" evidence="1"/>
<dbReference type="EC" id="3.5.1.2" evidence="1"/>
<dbReference type="EMBL" id="BX251411">
    <property type="protein sequence ID" value="CAD67172.1"/>
    <property type="molecule type" value="Genomic_DNA"/>
</dbReference>
<dbReference type="RefSeq" id="WP_011096452.1">
    <property type="nucleotide sequence ID" value="NC_004551.1"/>
</dbReference>
<dbReference type="SMR" id="Q83HM6"/>
<dbReference type="GeneID" id="67388284"/>
<dbReference type="KEGG" id="tws:TW505"/>
<dbReference type="HOGENOM" id="CLU_069674_2_0_11"/>
<dbReference type="UniPathway" id="UPA00245"/>
<dbReference type="GO" id="GO:0005829">
    <property type="term" value="C:cytosol"/>
    <property type="evidence" value="ECO:0007669"/>
    <property type="project" value="TreeGrafter"/>
</dbReference>
<dbReference type="GO" id="GO:1903600">
    <property type="term" value="C:glutaminase complex"/>
    <property type="evidence" value="ECO:0007669"/>
    <property type="project" value="TreeGrafter"/>
</dbReference>
<dbReference type="GO" id="GO:0004359">
    <property type="term" value="F:glutaminase activity"/>
    <property type="evidence" value="ECO:0007669"/>
    <property type="project" value="UniProtKB-UniRule"/>
</dbReference>
<dbReference type="GO" id="GO:0036381">
    <property type="term" value="F:pyridoxal 5'-phosphate synthase (glutamine hydrolysing) activity"/>
    <property type="evidence" value="ECO:0007669"/>
    <property type="project" value="UniProtKB-UniRule"/>
</dbReference>
<dbReference type="GO" id="GO:0006543">
    <property type="term" value="P:glutamine catabolic process"/>
    <property type="evidence" value="ECO:0007669"/>
    <property type="project" value="UniProtKB-UniRule"/>
</dbReference>
<dbReference type="GO" id="GO:0042823">
    <property type="term" value="P:pyridoxal phosphate biosynthetic process"/>
    <property type="evidence" value="ECO:0007669"/>
    <property type="project" value="UniProtKB-UniRule"/>
</dbReference>
<dbReference type="GO" id="GO:0008614">
    <property type="term" value="P:pyridoxine metabolic process"/>
    <property type="evidence" value="ECO:0007669"/>
    <property type="project" value="TreeGrafter"/>
</dbReference>
<dbReference type="CDD" id="cd01749">
    <property type="entry name" value="GATase1_PB"/>
    <property type="match status" value="1"/>
</dbReference>
<dbReference type="FunFam" id="3.40.50.880:FF:000010">
    <property type="entry name" value="uncharacterized protein LOC100176842 isoform X2"/>
    <property type="match status" value="1"/>
</dbReference>
<dbReference type="Gene3D" id="3.40.50.880">
    <property type="match status" value="1"/>
</dbReference>
<dbReference type="HAMAP" id="MF_01615">
    <property type="entry name" value="PdxT"/>
    <property type="match status" value="1"/>
</dbReference>
<dbReference type="InterPro" id="IPR029062">
    <property type="entry name" value="Class_I_gatase-like"/>
</dbReference>
<dbReference type="InterPro" id="IPR002161">
    <property type="entry name" value="PdxT/SNO"/>
</dbReference>
<dbReference type="InterPro" id="IPR021196">
    <property type="entry name" value="PdxT/SNO_CS"/>
</dbReference>
<dbReference type="NCBIfam" id="TIGR03800">
    <property type="entry name" value="PLP_synth_Pdx2"/>
    <property type="match status" value="1"/>
</dbReference>
<dbReference type="PANTHER" id="PTHR31559">
    <property type="entry name" value="PYRIDOXAL 5'-PHOSPHATE SYNTHASE SUBUNIT SNO"/>
    <property type="match status" value="1"/>
</dbReference>
<dbReference type="PANTHER" id="PTHR31559:SF0">
    <property type="entry name" value="PYRIDOXAL 5'-PHOSPHATE SYNTHASE SUBUNIT SNO1-RELATED"/>
    <property type="match status" value="1"/>
</dbReference>
<dbReference type="Pfam" id="PF01174">
    <property type="entry name" value="SNO"/>
    <property type="match status" value="1"/>
</dbReference>
<dbReference type="PIRSF" id="PIRSF005639">
    <property type="entry name" value="Glut_amidoT_SNO"/>
    <property type="match status" value="1"/>
</dbReference>
<dbReference type="SUPFAM" id="SSF52317">
    <property type="entry name" value="Class I glutamine amidotransferase-like"/>
    <property type="match status" value="1"/>
</dbReference>
<dbReference type="PROSITE" id="PS01236">
    <property type="entry name" value="PDXT_SNO_1"/>
    <property type="match status" value="1"/>
</dbReference>
<dbReference type="PROSITE" id="PS51130">
    <property type="entry name" value="PDXT_SNO_2"/>
    <property type="match status" value="1"/>
</dbReference>
<reference key="1">
    <citation type="journal article" date="2003" name="Lancet">
        <title>Sequencing and analysis of the genome of the Whipple's disease bacterium Tropheryma whipplei.</title>
        <authorList>
            <person name="Bentley S.D."/>
            <person name="Maiwald M."/>
            <person name="Murphy L.D."/>
            <person name="Pallen M.J."/>
            <person name="Yeats C.A."/>
            <person name="Dover L.G."/>
            <person name="Norbertczak H.T."/>
            <person name="Besra G.S."/>
            <person name="Quail M.A."/>
            <person name="Harris D.E."/>
            <person name="von Herbay A."/>
            <person name="Goble A."/>
            <person name="Rutter S."/>
            <person name="Squares R."/>
            <person name="Squares S."/>
            <person name="Barrell B.G."/>
            <person name="Parkhill J."/>
            <person name="Relman D.A."/>
        </authorList>
    </citation>
    <scope>NUCLEOTIDE SEQUENCE [LARGE SCALE GENOMIC DNA]</scope>
    <source>
        <strain>TW08/27</strain>
    </source>
</reference>
<feature type="chain" id="PRO_0000135673" description="Pyridoxal 5'-phosphate synthase subunit PdxT">
    <location>
        <begin position="1"/>
        <end position="188"/>
    </location>
</feature>
<feature type="active site" description="Nucleophile" evidence="1">
    <location>
        <position position="78"/>
    </location>
</feature>
<feature type="active site" description="Charge relay system" evidence="1">
    <location>
        <position position="169"/>
    </location>
</feature>
<feature type="active site" description="Charge relay system" evidence="1">
    <location>
        <position position="171"/>
    </location>
</feature>
<feature type="binding site" evidence="1">
    <location>
        <begin position="46"/>
        <end position="48"/>
    </location>
    <ligand>
        <name>L-glutamine</name>
        <dbReference type="ChEBI" id="CHEBI:58359"/>
    </ligand>
</feature>
<feature type="binding site" evidence="1">
    <location>
        <position position="106"/>
    </location>
    <ligand>
        <name>L-glutamine</name>
        <dbReference type="ChEBI" id="CHEBI:58359"/>
    </ligand>
</feature>
<feature type="binding site" evidence="1">
    <location>
        <begin position="132"/>
        <end position="133"/>
    </location>
    <ligand>
        <name>L-glutamine</name>
        <dbReference type="ChEBI" id="CHEBI:58359"/>
    </ligand>
</feature>
<accession>Q83HM6</accession>
<name>PDXT_TROW8</name>
<organism>
    <name type="scientific">Tropheryma whipplei (strain TW08/27)</name>
    <name type="common">Whipple's bacillus</name>
    <dbReference type="NCBI Taxonomy" id="218496"/>
    <lineage>
        <taxon>Bacteria</taxon>
        <taxon>Bacillati</taxon>
        <taxon>Actinomycetota</taxon>
        <taxon>Actinomycetes</taxon>
        <taxon>Micrococcales</taxon>
        <taxon>Tropherymataceae</taxon>
        <taxon>Tropheryma</taxon>
    </lineage>
</organism>
<keyword id="KW-0315">Glutamine amidotransferase</keyword>
<keyword id="KW-0378">Hydrolase</keyword>
<keyword id="KW-0456">Lyase</keyword>
<keyword id="KW-0663">Pyridoxal phosphate</keyword>
<sequence>MTVGVLSLQGSFYEHLSILSRLNTDHIQVKTSEDLSRVTRLIIPGGESTAMLALTQKSGLFDLVRDRIMSGMPVYGTCAGMIMLSTFVEDFPNQKTLSCLDIAVRRNAFGRQINSFESEVSFLNSKITVPFIRAPKITQIGEGVDVLSRLESGDIVAVRQGNVMATAFHPELTGGAAVHEYFLHLGLE</sequence>